<keyword id="KW-1185">Reference proteome</keyword>
<keyword id="KW-0678">Repressor</keyword>
<keyword id="KW-0687">Ribonucleoprotein</keyword>
<keyword id="KW-0689">Ribosomal protein</keyword>
<keyword id="KW-0694">RNA-binding</keyword>
<keyword id="KW-0699">rRNA-binding</keyword>
<keyword id="KW-0810">Translation regulation</keyword>
<keyword id="KW-0820">tRNA-binding</keyword>
<comment type="function">
    <text evidence="1">Binds directly to 23S rRNA. The L1 stalk is quite mobile in the ribosome, and is involved in E site tRNA release.</text>
</comment>
<comment type="function">
    <text evidence="1">Protein L1 is also a translational repressor protein, it controls the translation of the L11 operon by binding to its mRNA.</text>
</comment>
<comment type="subunit">
    <text evidence="1">Part of the 50S ribosomal subunit.</text>
</comment>
<comment type="similarity">
    <text evidence="1">Belongs to the universal ribosomal protein uL1 family.</text>
</comment>
<accession>Q1G8Z9</accession>
<evidence type="ECO:0000255" key="1">
    <source>
        <dbReference type="HAMAP-Rule" id="MF_01318"/>
    </source>
</evidence>
<evidence type="ECO:0000305" key="2"/>
<dbReference type="EMBL" id="CR954253">
    <property type="protein sequence ID" value="CAI98454.1"/>
    <property type="molecule type" value="Genomic_DNA"/>
</dbReference>
<dbReference type="RefSeq" id="WP_003621915.1">
    <property type="nucleotide sequence ID" value="NZ_JQAV01000002.1"/>
</dbReference>
<dbReference type="SMR" id="Q1G8Z9"/>
<dbReference type="STRING" id="390333.Ldb1665"/>
<dbReference type="KEGG" id="ldb:Ldb1665"/>
<dbReference type="PATRIC" id="fig|390333.13.peg.960"/>
<dbReference type="eggNOG" id="COG0081">
    <property type="taxonomic scope" value="Bacteria"/>
</dbReference>
<dbReference type="HOGENOM" id="CLU_062853_0_0_9"/>
<dbReference type="BioCyc" id="LDEL390333:LDB_RS07190-MONOMER"/>
<dbReference type="Proteomes" id="UP000001259">
    <property type="component" value="Chromosome"/>
</dbReference>
<dbReference type="GO" id="GO:0015934">
    <property type="term" value="C:large ribosomal subunit"/>
    <property type="evidence" value="ECO:0007669"/>
    <property type="project" value="InterPro"/>
</dbReference>
<dbReference type="GO" id="GO:0019843">
    <property type="term" value="F:rRNA binding"/>
    <property type="evidence" value="ECO:0007669"/>
    <property type="project" value="UniProtKB-UniRule"/>
</dbReference>
<dbReference type="GO" id="GO:0003735">
    <property type="term" value="F:structural constituent of ribosome"/>
    <property type="evidence" value="ECO:0007669"/>
    <property type="project" value="InterPro"/>
</dbReference>
<dbReference type="GO" id="GO:0000049">
    <property type="term" value="F:tRNA binding"/>
    <property type="evidence" value="ECO:0007669"/>
    <property type="project" value="UniProtKB-KW"/>
</dbReference>
<dbReference type="GO" id="GO:0006417">
    <property type="term" value="P:regulation of translation"/>
    <property type="evidence" value="ECO:0007669"/>
    <property type="project" value="UniProtKB-KW"/>
</dbReference>
<dbReference type="GO" id="GO:0006412">
    <property type="term" value="P:translation"/>
    <property type="evidence" value="ECO:0007669"/>
    <property type="project" value="UniProtKB-UniRule"/>
</dbReference>
<dbReference type="CDD" id="cd00403">
    <property type="entry name" value="Ribosomal_L1"/>
    <property type="match status" value="1"/>
</dbReference>
<dbReference type="FunFam" id="3.40.50.790:FF:000001">
    <property type="entry name" value="50S ribosomal protein L1"/>
    <property type="match status" value="1"/>
</dbReference>
<dbReference type="Gene3D" id="3.30.190.20">
    <property type="match status" value="1"/>
</dbReference>
<dbReference type="Gene3D" id="3.40.50.790">
    <property type="match status" value="1"/>
</dbReference>
<dbReference type="HAMAP" id="MF_01318_B">
    <property type="entry name" value="Ribosomal_uL1_B"/>
    <property type="match status" value="1"/>
</dbReference>
<dbReference type="InterPro" id="IPR005878">
    <property type="entry name" value="Ribosom_uL1_bac-type"/>
</dbReference>
<dbReference type="InterPro" id="IPR002143">
    <property type="entry name" value="Ribosomal_uL1"/>
</dbReference>
<dbReference type="InterPro" id="IPR023674">
    <property type="entry name" value="Ribosomal_uL1-like"/>
</dbReference>
<dbReference type="InterPro" id="IPR028364">
    <property type="entry name" value="Ribosomal_uL1/biogenesis"/>
</dbReference>
<dbReference type="InterPro" id="IPR016095">
    <property type="entry name" value="Ribosomal_uL1_3-a/b-sand"/>
</dbReference>
<dbReference type="InterPro" id="IPR023673">
    <property type="entry name" value="Ribosomal_uL1_CS"/>
</dbReference>
<dbReference type="NCBIfam" id="TIGR01169">
    <property type="entry name" value="rplA_bact"/>
    <property type="match status" value="1"/>
</dbReference>
<dbReference type="PANTHER" id="PTHR36427">
    <property type="entry name" value="54S RIBOSOMAL PROTEIN L1, MITOCHONDRIAL"/>
    <property type="match status" value="1"/>
</dbReference>
<dbReference type="PANTHER" id="PTHR36427:SF3">
    <property type="entry name" value="LARGE RIBOSOMAL SUBUNIT PROTEIN UL1M"/>
    <property type="match status" value="1"/>
</dbReference>
<dbReference type="Pfam" id="PF00687">
    <property type="entry name" value="Ribosomal_L1"/>
    <property type="match status" value="1"/>
</dbReference>
<dbReference type="PIRSF" id="PIRSF002155">
    <property type="entry name" value="Ribosomal_L1"/>
    <property type="match status" value="1"/>
</dbReference>
<dbReference type="SUPFAM" id="SSF56808">
    <property type="entry name" value="Ribosomal protein L1"/>
    <property type="match status" value="1"/>
</dbReference>
<dbReference type="PROSITE" id="PS01199">
    <property type="entry name" value="RIBOSOMAL_L1"/>
    <property type="match status" value="1"/>
</dbReference>
<organism>
    <name type="scientific">Lactobacillus delbrueckii subsp. bulgaricus (strain ATCC 11842 / DSM 20081 / BCRC 10696 / JCM 1002 / NBRC 13953 / NCIMB 11778 / NCTC 12712 / WDCM 00102 / Lb 14)</name>
    <dbReference type="NCBI Taxonomy" id="390333"/>
    <lineage>
        <taxon>Bacteria</taxon>
        <taxon>Bacillati</taxon>
        <taxon>Bacillota</taxon>
        <taxon>Bacilli</taxon>
        <taxon>Lactobacillales</taxon>
        <taxon>Lactobacillaceae</taxon>
        <taxon>Lactobacillus</taxon>
    </lineage>
</organism>
<feature type="chain" id="PRO_0000308029" description="Large ribosomal subunit protein uL1">
    <location>
        <begin position="1"/>
        <end position="231"/>
    </location>
</feature>
<sequence>MPKHGKKYVEAAKKVDSNKLYSVEDAIKLVKETSYANFDASVEVSYNLSVDPKQADQQIRGSIVLPNGTGKSVKVIVFAEGPQAEAAKAAGADEVGADDLVEKVQNGYLDFDVVIATPMMMAKVGRLGRVLGPKGLMPNPKTGTVTMDTAKAVQNVKAGQVEYRVDRQASIHTAIGKVSFTEEQLTENFRALQNAILRAKPASAKGQYIKSCAVAATFGPGIKLDPIALMA</sequence>
<protein>
    <recommendedName>
        <fullName evidence="1">Large ribosomal subunit protein uL1</fullName>
    </recommendedName>
    <alternativeName>
        <fullName evidence="2">50S ribosomal protein L1</fullName>
    </alternativeName>
</protein>
<name>RL1_LACDA</name>
<gene>
    <name evidence="1" type="primary">rplA</name>
    <name type="ordered locus">Ldb1665</name>
</gene>
<reference key="1">
    <citation type="journal article" date="2006" name="Proc. Natl. Acad. Sci. U.S.A.">
        <title>The complete genome sequence of Lactobacillus bulgaricus reveals extensive and ongoing reductive evolution.</title>
        <authorList>
            <person name="van de Guchte M."/>
            <person name="Penaud S."/>
            <person name="Grimaldi C."/>
            <person name="Barbe V."/>
            <person name="Bryson K."/>
            <person name="Nicolas P."/>
            <person name="Robert C."/>
            <person name="Oztas S."/>
            <person name="Mangenot S."/>
            <person name="Couloux A."/>
            <person name="Loux V."/>
            <person name="Dervyn R."/>
            <person name="Bossy R."/>
            <person name="Bolotin A."/>
            <person name="Batto J.-M."/>
            <person name="Walunas T."/>
            <person name="Gibrat J.-F."/>
            <person name="Bessieres P."/>
            <person name="Weissenbach J."/>
            <person name="Ehrlich S.D."/>
            <person name="Maguin E."/>
        </authorList>
    </citation>
    <scope>NUCLEOTIDE SEQUENCE [LARGE SCALE GENOMIC DNA]</scope>
    <source>
        <strain>ATCC 11842 / DSM 20081 / BCRC 10696 / JCM 1002 / NBRC 13953 / NCIMB 11778 / NCTC 12712 / WDCM 00102 / Lb 14</strain>
    </source>
</reference>
<proteinExistence type="inferred from homology"/>